<evidence type="ECO:0000256" key="1">
    <source>
        <dbReference type="SAM" id="MobiDB-lite"/>
    </source>
</evidence>
<evidence type="ECO:0000269" key="2">
    <source>
    </source>
</evidence>
<evidence type="ECO:0000269" key="3">
    <source>
    </source>
</evidence>
<evidence type="ECO:0007744" key="4">
    <source>
    </source>
</evidence>
<evidence type="ECO:0007744" key="5">
    <source>
    </source>
</evidence>
<feature type="initiator methionine" description="Removed" evidence="5">
    <location>
        <position position="1"/>
    </location>
</feature>
<feature type="chain" id="PRO_0000072133" description="Sporulation-specific protein 12">
    <location>
        <begin position="2"/>
        <end position="173"/>
    </location>
</feature>
<feature type="region of interest" description="Disordered" evidence="1">
    <location>
        <begin position="1"/>
        <end position="56"/>
    </location>
</feature>
<feature type="region of interest" description="Negative-charged tail">
    <location>
        <begin position="159"/>
        <end position="173"/>
    </location>
</feature>
<feature type="compositionally biased region" description="Polar residues" evidence="1">
    <location>
        <begin position="1"/>
        <end position="12"/>
    </location>
</feature>
<feature type="modified residue" description="N-acetylserine" evidence="5">
    <location>
        <position position="2"/>
    </location>
</feature>
<feature type="modified residue" description="Phosphoserine" evidence="4">
    <location>
        <position position="118"/>
    </location>
</feature>
<feature type="modified residue" description="Phosphoserine" evidence="4">
    <location>
        <position position="125"/>
    </location>
</feature>
<keyword id="KW-0007">Acetylation</keyword>
<keyword id="KW-0469">Meiosis</keyword>
<keyword id="KW-0597">Phosphoprotein</keyword>
<keyword id="KW-1185">Reference proteome</keyword>
<keyword id="KW-0749">Sporulation</keyword>
<name>SPO12_YEAST</name>
<proteinExistence type="evidence at protein level"/>
<accession>P17123</accession>
<accession>D3DLA1</accession>
<gene>
    <name type="primary">SPO12</name>
    <name type="ordered locus">YHR152W</name>
</gene>
<protein>
    <recommendedName>
        <fullName>Sporulation-specific protein 12</fullName>
    </recommendedName>
</protein>
<sequence>MSNKASDQSARTASILKTDITRENTITRSSSSNNDNYHHHNNINNYNESAKTGEDANKENIPNLEEEIAAFRIFRKKSTSNLKSSHTTSNLVKKTMFKRDLLKQDPKRKLQLQQRFASPTDRLVSPCSLKLNEHKVKMFGKKKKVNPMKLNFKGNLAADSEDVEIDEDEEYFY</sequence>
<organism>
    <name type="scientific">Saccharomyces cerevisiae (strain ATCC 204508 / S288c)</name>
    <name type="common">Baker's yeast</name>
    <dbReference type="NCBI Taxonomy" id="559292"/>
    <lineage>
        <taxon>Eukaryota</taxon>
        <taxon>Fungi</taxon>
        <taxon>Dikarya</taxon>
        <taxon>Ascomycota</taxon>
        <taxon>Saccharomycotina</taxon>
        <taxon>Saccharomycetes</taxon>
        <taxon>Saccharomycetales</taxon>
        <taxon>Saccharomycetaceae</taxon>
        <taxon>Saccharomyces</taxon>
    </lineage>
</organism>
<reference key="1">
    <citation type="journal article" date="1990" name="Mol. Cell. Biol.">
        <title>Complementary transcripts from two genes necessary for normal meiosis in the yeast Saccharomyces cerevisiae.</title>
        <authorList>
            <person name="Malavasic M.J."/>
            <person name="Elder R.T."/>
        </authorList>
    </citation>
    <scope>NUCLEOTIDE SEQUENCE [GENOMIC DNA]</scope>
</reference>
<reference key="2">
    <citation type="journal article" date="1994" name="Science">
        <title>Complete nucleotide sequence of Saccharomyces cerevisiae chromosome VIII.</title>
        <authorList>
            <person name="Johnston M."/>
            <person name="Andrews S."/>
            <person name="Brinkman R."/>
            <person name="Cooper J."/>
            <person name="Ding H."/>
            <person name="Dover J."/>
            <person name="Du Z."/>
            <person name="Favello A."/>
            <person name="Fulton L."/>
            <person name="Gattung S."/>
            <person name="Geisel C."/>
            <person name="Kirsten J."/>
            <person name="Kucaba T."/>
            <person name="Hillier L.W."/>
            <person name="Jier M."/>
            <person name="Johnston L."/>
            <person name="Langston Y."/>
            <person name="Latreille P."/>
            <person name="Louis E.J."/>
            <person name="Macri C."/>
            <person name="Mardis E."/>
            <person name="Menezes S."/>
            <person name="Mouser L."/>
            <person name="Nhan M."/>
            <person name="Rifkin L."/>
            <person name="Riles L."/>
            <person name="St Peter H."/>
            <person name="Trevaskis E."/>
            <person name="Vaughan K."/>
            <person name="Vignati D."/>
            <person name="Wilcox L."/>
            <person name="Wohldman P."/>
            <person name="Waterston R."/>
            <person name="Wilson R."/>
            <person name="Vaudin M."/>
        </authorList>
    </citation>
    <scope>NUCLEOTIDE SEQUENCE [LARGE SCALE GENOMIC DNA]</scope>
    <source>
        <strain>ATCC 204508 / S288c</strain>
    </source>
</reference>
<reference key="3">
    <citation type="journal article" date="2014" name="G3 (Bethesda)">
        <title>The reference genome sequence of Saccharomyces cerevisiae: Then and now.</title>
        <authorList>
            <person name="Engel S.R."/>
            <person name="Dietrich F.S."/>
            <person name="Fisk D.G."/>
            <person name="Binkley G."/>
            <person name="Balakrishnan R."/>
            <person name="Costanzo M.C."/>
            <person name="Dwight S.S."/>
            <person name="Hitz B.C."/>
            <person name="Karra K."/>
            <person name="Nash R.S."/>
            <person name="Weng S."/>
            <person name="Wong E.D."/>
            <person name="Lloyd P."/>
            <person name="Skrzypek M.S."/>
            <person name="Miyasato S.R."/>
            <person name="Simison M."/>
            <person name="Cherry J.M."/>
        </authorList>
    </citation>
    <scope>GENOME REANNOTATION</scope>
    <source>
        <strain>ATCC 204508 / S288c</strain>
    </source>
</reference>
<reference key="4">
    <citation type="journal article" date="2002" name="Cell">
        <title>Separase, polo kinase, the kinetochore protein Slk19, and Spo12 function in a network that controls Cdc14 localization during early anaphase.</title>
        <authorList>
            <person name="Stegmeier F."/>
            <person name="Visintin R."/>
            <person name="Amon A."/>
        </authorList>
    </citation>
    <scope>FUNCTION AS A COMPONENT OF THE FEAR NETWORK</scope>
</reference>
<reference key="5">
    <citation type="journal article" date="2003" name="Nature">
        <title>Global analysis of protein expression in yeast.</title>
        <authorList>
            <person name="Ghaemmaghami S."/>
            <person name="Huh W.-K."/>
            <person name="Bower K."/>
            <person name="Howson R.W."/>
            <person name="Belle A."/>
            <person name="Dephoure N."/>
            <person name="O'Shea E.K."/>
            <person name="Weissman J.S."/>
        </authorList>
    </citation>
    <scope>LEVEL OF PROTEIN EXPRESSION [LARGE SCALE ANALYSIS]</scope>
</reference>
<reference key="6">
    <citation type="journal article" date="2009" name="Science">
        <title>Global analysis of Cdk1 substrate phosphorylation sites provides insights into evolution.</title>
        <authorList>
            <person name="Holt L.J."/>
            <person name="Tuch B.B."/>
            <person name="Villen J."/>
            <person name="Johnson A.D."/>
            <person name="Gygi S.P."/>
            <person name="Morgan D.O."/>
        </authorList>
    </citation>
    <scope>PHOSPHORYLATION [LARGE SCALE ANALYSIS] AT SER-118 AND SER-125</scope>
    <scope>IDENTIFICATION BY MASS SPECTROMETRY [LARGE SCALE ANALYSIS]</scope>
</reference>
<reference key="7">
    <citation type="journal article" date="2012" name="Proc. Natl. Acad. Sci. U.S.A.">
        <title>N-terminal acetylome analyses and functional insights of the N-terminal acetyltransferase NatB.</title>
        <authorList>
            <person name="Van Damme P."/>
            <person name="Lasa M."/>
            <person name="Polevoda B."/>
            <person name="Gazquez C."/>
            <person name="Elosegui-Artola A."/>
            <person name="Kim D.S."/>
            <person name="De Juan-Pardo E."/>
            <person name="Demeyer K."/>
            <person name="Hole K."/>
            <person name="Larrea E."/>
            <person name="Timmerman E."/>
            <person name="Prieto J."/>
            <person name="Arnesen T."/>
            <person name="Sherman F."/>
            <person name="Gevaert K."/>
            <person name="Aldabe R."/>
        </authorList>
    </citation>
    <scope>ACETYLATION [LARGE SCALE ANALYSIS] AT SER-2</scope>
    <scope>CLEAVAGE OF INITIATOR METHIONINE [LARGE SCALE ANALYSIS]</scope>
    <scope>IDENTIFICATION BY MASS SPECTROMETRY [LARGE SCALE ANALYSIS]</scope>
</reference>
<comment type="function">
    <text evidence="2">It is required for meiosis I chromosome division during sporulation. A component of the FEAR (CDC14 early anaphase release) network which promotes CDC14 release from the nucleolus during early anaphase.</text>
</comment>
<comment type="miscellaneous">
    <text>Its negative tail is functionally important.</text>
</comment>
<comment type="miscellaneous">
    <text evidence="3">Present with 937 molecules/cell in log phase SD medium.</text>
</comment>
<dbReference type="EMBL" id="M32653">
    <property type="protein sequence ID" value="AAA35076.1"/>
    <property type="molecule type" value="Genomic_DNA"/>
</dbReference>
<dbReference type="EMBL" id="U10397">
    <property type="protein sequence ID" value="AAB68979.1"/>
    <property type="molecule type" value="Genomic_DNA"/>
</dbReference>
<dbReference type="EMBL" id="BK006934">
    <property type="protein sequence ID" value="DAA06845.1"/>
    <property type="molecule type" value="Genomic_DNA"/>
</dbReference>
<dbReference type="PIR" id="B36321">
    <property type="entry name" value="B36321"/>
</dbReference>
<dbReference type="RefSeq" id="NP_012022.1">
    <property type="nucleotide sequence ID" value="NM_001179283.1"/>
</dbReference>
<dbReference type="BioGRID" id="36586">
    <property type="interactions" value="181"/>
</dbReference>
<dbReference type="DIP" id="DIP-1654N"/>
<dbReference type="FunCoup" id="P17123">
    <property type="interactions" value="288"/>
</dbReference>
<dbReference type="IntAct" id="P17123">
    <property type="interactions" value="36"/>
</dbReference>
<dbReference type="MINT" id="P17123"/>
<dbReference type="STRING" id="4932.YHR152W"/>
<dbReference type="iPTMnet" id="P17123"/>
<dbReference type="PaxDb" id="4932-YHR152W"/>
<dbReference type="PeptideAtlas" id="P17123"/>
<dbReference type="EnsemblFungi" id="YHR152W_mRNA">
    <property type="protein sequence ID" value="YHR152W"/>
    <property type="gene ID" value="YHR152W"/>
</dbReference>
<dbReference type="GeneID" id="856557"/>
<dbReference type="KEGG" id="sce:YHR152W"/>
<dbReference type="AGR" id="SGD:S000001195"/>
<dbReference type="SGD" id="S000001195">
    <property type="gene designation" value="SPO12"/>
</dbReference>
<dbReference type="VEuPathDB" id="FungiDB:YHR152W"/>
<dbReference type="eggNOG" id="ENOG502SAUW">
    <property type="taxonomic scope" value="Eukaryota"/>
</dbReference>
<dbReference type="HOGENOM" id="CLU_1548496_0_0_1"/>
<dbReference type="InParanoid" id="P17123"/>
<dbReference type="OrthoDB" id="5578329at2759"/>
<dbReference type="BioCyc" id="YEAST:G3O-31187-MONOMER"/>
<dbReference type="BioGRID-ORCS" id="856557">
    <property type="hits" value="0 hits in 10 CRISPR screens"/>
</dbReference>
<dbReference type="PRO" id="PR:P17123"/>
<dbReference type="Proteomes" id="UP000002311">
    <property type="component" value="Chromosome VIII"/>
</dbReference>
<dbReference type="RNAct" id="P17123">
    <property type="molecule type" value="protein"/>
</dbReference>
<dbReference type="GO" id="GO:0005730">
    <property type="term" value="C:nucleolus"/>
    <property type="evidence" value="ECO:0000314"/>
    <property type="project" value="SGD"/>
</dbReference>
<dbReference type="GO" id="GO:0005634">
    <property type="term" value="C:nucleus"/>
    <property type="evidence" value="ECO:0000314"/>
    <property type="project" value="SGD"/>
</dbReference>
<dbReference type="GO" id="GO:0007127">
    <property type="term" value="P:meiosis I"/>
    <property type="evidence" value="ECO:0000315"/>
    <property type="project" value="SGD"/>
</dbReference>
<dbReference type="GO" id="GO:1904750">
    <property type="term" value="P:negative regulation of protein localization to nucleolus"/>
    <property type="evidence" value="ECO:0000315"/>
    <property type="project" value="SGD"/>
</dbReference>
<dbReference type="GO" id="GO:0031536">
    <property type="term" value="P:positive regulation of exit from mitosis"/>
    <property type="evidence" value="ECO:0000315"/>
    <property type="project" value="SGD"/>
</dbReference>
<dbReference type="GO" id="GO:0030435">
    <property type="term" value="P:sporulation resulting in formation of a cellular spore"/>
    <property type="evidence" value="ECO:0007669"/>
    <property type="project" value="UniProtKB-KW"/>
</dbReference>
<dbReference type="InterPro" id="IPR007727">
    <property type="entry name" value="Spo12"/>
</dbReference>
<dbReference type="Pfam" id="PF05032">
    <property type="entry name" value="Spo12"/>
    <property type="match status" value="1"/>
</dbReference>